<keyword id="KW-0963">Cytoplasm</keyword>
<keyword id="KW-0350">Heme biosynthesis</keyword>
<keyword id="KW-0408">Iron</keyword>
<keyword id="KW-0456">Lyase</keyword>
<keyword id="KW-0479">Metal-binding</keyword>
<keyword id="KW-0627">Porphyrin biosynthesis</keyword>
<keyword id="KW-1185">Reference proteome</keyword>
<proteinExistence type="inferred from homology"/>
<dbReference type="EC" id="4.98.1.1" evidence="1"/>
<dbReference type="EMBL" id="CP000153">
    <property type="protein sequence ID" value="ABB44196.1"/>
    <property type="molecule type" value="Genomic_DNA"/>
</dbReference>
<dbReference type="RefSeq" id="WP_011372548.1">
    <property type="nucleotide sequence ID" value="NC_007575.1"/>
</dbReference>
<dbReference type="SMR" id="Q30S35"/>
<dbReference type="STRING" id="326298.Suden_0918"/>
<dbReference type="KEGG" id="tdn:Suden_0918"/>
<dbReference type="eggNOG" id="COG0276">
    <property type="taxonomic scope" value="Bacteria"/>
</dbReference>
<dbReference type="HOGENOM" id="CLU_018884_4_1_7"/>
<dbReference type="OrthoDB" id="9809741at2"/>
<dbReference type="UniPathway" id="UPA00252">
    <property type="reaction ID" value="UER00325"/>
</dbReference>
<dbReference type="Proteomes" id="UP000002714">
    <property type="component" value="Chromosome"/>
</dbReference>
<dbReference type="GO" id="GO:0005737">
    <property type="term" value="C:cytoplasm"/>
    <property type="evidence" value="ECO:0007669"/>
    <property type="project" value="UniProtKB-SubCell"/>
</dbReference>
<dbReference type="GO" id="GO:0004325">
    <property type="term" value="F:ferrochelatase activity"/>
    <property type="evidence" value="ECO:0007669"/>
    <property type="project" value="UniProtKB-UniRule"/>
</dbReference>
<dbReference type="GO" id="GO:0046872">
    <property type="term" value="F:metal ion binding"/>
    <property type="evidence" value="ECO:0007669"/>
    <property type="project" value="UniProtKB-KW"/>
</dbReference>
<dbReference type="GO" id="GO:0006783">
    <property type="term" value="P:heme biosynthetic process"/>
    <property type="evidence" value="ECO:0007669"/>
    <property type="project" value="UniProtKB-UniRule"/>
</dbReference>
<dbReference type="CDD" id="cd00419">
    <property type="entry name" value="Ferrochelatase_C"/>
    <property type="match status" value="1"/>
</dbReference>
<dbReference type="CDD" id="cd03411">
    <property type="entry name" value="Ferrochelatase_N"/>
    <property type="match status" value="1"/>
</dbReference>
<dbReference type="Gene3D" id="3.40.50.1400">
    <property type="match status" value="2"/>
</dbReference>
<dbReference type="HAMAP" id="MF_00323">
    <property type="entry name" value="Ferrochelatase"/>
    <property type="match status" value="1"/>
</dbReference>
<dbReference type="InterPro" id="IPR001015">
    <property type="entry name" value="Ferrochelatase"/>
</dbReference>
<dbReference type="InterPro" id="IPR019772">
    <property type="entry name" value="Ferrochelatase_AS"/>
</dbReference>
<dbReference type="InterPro" id="IPR033644">
    <property type="entry name" value="Ferrochelatase_C"/>
</dbReference>
<dbReference type="InterPro" id="IPR033659">
    <property type="entry name" value="Ferrochelatase_N"/>
</dbReference>
<dbReference type="NCBIfam" id="TIGR00109">
    <property type="entry name" value="hemH"/>
    <property type="match status" value="1"/>
</dbReference>
<dbReference type="PANTHER" id="PTHR11108">
    <property type="entry name" value="FERROCHELATASE"/>
    <property type="match status" value="1"/>
</dbReference>
<dbReference type="PANTHER" id="PTHR11108:SF1">
    <property type="entry name" value="FERROCHELATASE, MITOCHONDRIAL"/>
    <property type="match status" value="1"/>
</dbReference>
<dbReference type="Pfam" id="PF00762">
    <property type="entry name" value="Ferrochelatase"/>
    <property type="match status" value="1"/>
</dbReference>
<dbReference type="SUPFAM" id="SSF53800">
    <property type="entry name" value="Chelatase"/>
    <property type="match status" value="1"/>
</dbReference>
<dbReference type="PROSITE" id="PS00534">
    <property type="entry name" value="FERROCHELATASE"/>
    <property type="match status" value="1"/>
</dbReference>
<accession>Q30S35</accession>
<organism>
    <name type="scientific">Sulfurimonas denitrificans (strain ATCC 33889 / DSM 1251)</name>
    <name type="common">Thiomicrospira denitrificans (strain ATCC 33889 / DSM 1251)</name>
    <dbReference type="NCBI Taxonomy" id="326298"/>
    <lineage>
        <taxon>Bacteria</taxon>
        <taxon>Pseudomonadati</taxon>
        <taxon>Campylobacterota</taxon>
        <taxon>Epsilonproteobacteria</taxon>
        <taxon>Campylobacterales</taxon>
        <taxon>Sulfurimonadaceae</taxon>
        <taxon>Sulfurimonas</taxon>
    </lineage>
</organism>
<name>HEMH_SULDN</name>
<evidence type="ECO:0000255" key="1">
    <source>
        <dbReference type="HAMAP-Rule" id="MF_00323"/>
    </source>
</evidence>
<gene>
    <name evidence="1" type="primary">hemH</name>
    <name type="ordered locus">Suden_0918</name>
</gene>
<feature type="chain" id="PRO_1000205157" description="Ferrochelatase">
    <location>
        <begin position="1"/>
        <end position="316"/>
    </location>
</feature>
<feature type="binding site" evidence="1">
    <location>
        <position position="190"/>
    </location>
    <ligand>
        <name>Fe cation</name>
        <dbReference type="ChEBI" id="CHEBI:24875"/>
    </ligand>
</feature>
<feature type="binding site" evidence="1">
    <location>
        <position position="271"/>
    </location>
    <ligand>
        <name>Fe cation</name>
        <dbReference type="ChEBI" id="CHEBI:24875"/>
    </ligand>
</feature>
<reference key="1">
    <citation type="journal article" date="2008" name="Appl. Environ. Microbiol.">
        <title>Genome of the epsilonproteobacterial chemolithoautotroph Sulfurimonas denitrificans.</title>
        <authorList>
            <person name="Sievert S.M."/>
            <person name="Scott K.M."/>
            <person name="Klotz M.G."/>
            <person name="Chain P.S.G."/>
            <person name="Hauser L.J."/>
            <person name="Hemp J."/>
            <person name="Huegler M."/>
            <person name="Land M."/>
            <person name="Lapidus A."/>
            <person name="Larimer F.W."/>
            <person name="Lucas S."/>
            <person name="Malfatti S.A."/>
            <person name="Meyer F."/>
            <person name="Paulsen I.T."/>
            <person name="Ren Q."/>
            <person name="Simon J."/>
            <person name="Bailey K."/>
            <person name="Diaz E."/>
            <person name="Fitzpatrick K.A."/>
            <person name="Glover B."/>
            <person name="Gwatney N."/>
            <person name="Korajkic A."/>
            <person name="Long A."/>
            <person name="Mobberley J.M."/>
            <person name="Pantry S.N."/>
            <person name="Pazder G."/>
            <person name="Peterson S."/>
            <person name="Quintanilla J.D."/>
            <person name="Sprinkle R."/>
            <person name="Stephens J."/>
            <person name="Thomas P."/>
            <person name="Vaughn R."/>
            <person name="Weber M.J."/>
            <person name="Wooten L.L."/>
        </authorList>
    </citation>
    <scope>NUCLEOTIDE SEQUENCE [LARGE SCALE GENOMIC DNA]</scope>
    <source>
        <strain>ATCC 33889 / DSM 1251</strain>
    </source>
</reference>
<comment type="function">
    <text evidence="1">Catalyzes the ferrous insertion into protoporphyrin IX.</text>
</comment>
<comment type="catalytic activity">
    <reaction evidence="1">
        <text>heme b + 2 H(+) = protoporphyrin IX + Fe(2+)</text>
        <dbReference type="Rhea" id="RHEA:22584"/>
        <dbReference type="ChEBI" id="CHEBI:15378"/>
        <dbReference type="ChEBI" id="CHEBI:29033"/>
        <dbReference type="ChEBI" id="CHEBI:57306"/>
        <dbReference type="ChEBI" id="CHEBI:60344"/>
        <dbReference type="EC" id="4.98.1.1"/>
    </reaction>
</comment>
<comment type="pathway">
    <text evidence="1">Porphyrin-containing compound metabolism; protoheme biosynthesis; protoheme from protoporphyrin-IX: step 1/1.</text>
</comment>
<comment type="subcellular location">
    <subcellularLocation>
        <location evidence="1">Cytoplasm</location>
    </subcellularLocation>
</comment>
<comment type="similarity">
    <text evidence="1">Belongs to the ferrochelatase family.</text>
</comment>
<protein>
    <recommendedName>
        <fullName evidence="1">Ferrochelatase</fullName>
        <ecNumber evidence="1">4.98.1.1</ecNumber>
    </recommendedName>
    <alternativeName>
        <fullName evidence="1">Heme synthase</fullName>
    </alternativeName>
    <alternativeName>
        <fullName evidence="1">Protoheme ferro-lyase</fullName>
    </alternativeName>
</protein>
<sequence>MKKEAIILLNMGGPNNLEEVEVFLTNMFNDKNIITVKSSLLRKLIATLITFSRTEKSQEIYNQIGGKSPIVGHTKKLVEKLQNRVGENIIVDFAMRYTPPFVSEAIERLSDKNIEKIYLIPLYPQYSTTTTKSSLEDFEEQYHLSSGDAILVEIKHFFQNKNYNMAILERIKERVSLEEMSEFDLIFSAHGLPLKVIQRGDTYQLHVQKHISILEQMMQKEGMTFKNIHLAYQSKVGPMEWLKPSLEDKLREIKNRKVIIFPIAFTIDNSETDYELEIEYREVAHEMGYEEYRVCRCPNDSEYFVEALVDIYAKMR</sequence>